<name>CH603_BRADU</name>
<organism>
    <name type="scientific">Bradyrhizobium diazoefficiens (strain JCM 10833 / BCRC 13528 / IAM 13628 / NBRC 14792 / USDA 110)</name>
    <dbReference type="NCBI Taxonomy" id="224911"/>
    <lineage>
        <taxon>Bacteria</taxon>
        <taxon>Pseudomonadati</taxon>
        <taxon>Pseudomonadota</taxon>
        <taxon>Alphaproteobacteria</taxon>
        <taxon>Hyphomicrobiales</taxon>
        <taxon>Nitrobacteraceae</taxon>
        <taxon>Bradyrhizobium</taxon>
    </lineage>
</organism>
<gene>
    <name evidence="1" type="primary">groEL3</name>
    <name evidence="1" type="synonym">groL3</name>
    <name type="ordered locus">bll2059</name>
</gene>
<comment type="function">
    <text evidence="1">Together with its co-chaperonin GroES, plays an essential role in assisting protein folding. The GroEL-GroES system forms a nano-cage that allows encapsulation of the non-native substrate proteins and provides a physical environment optimized to promote and accelerate protein folding.</text>
</comment>
<comment type="catalytic activity">
    <reaction evidence="1">
        <text>ATP + H2O + a folded polypeptide = ADP + phosphate + an unfolded polypeptide.</text>
        <dbReference type="EC" id="5.6.1.7"/>
    </reaction>
</comment>
<comment type="subunit">
    <text evidence="1">Forms a cylinder of 14 subunits composed of two heptameric rings stacked back-to-back. Interacts with the co-chaperonin GroES.</text>
</comment>
<comment type="subcellular location">
    <subcellularLocation>
        <location evidence="1">Cytoplasm</location>
    </subcellularLocation>
</comment>
<comment type="induction">
    <text>By NifA.</text>
</comment>
<comment type="similarity">
    <text evidence="1">Belongs to the chaperonin (HSP60) family.</text>
</comment>
<keyword id="KW-0067">ATP-binding</keyword>
<keyword id="KW-0143">Chaperone</keyword>
<keyword id="KW-0963">Cytoplasm</keyword>
<keyword id="KW-0903">Direct protein sequencing</keyword>
<keyword id="KW-0413">Isomerase</keyword>
<keyword id="KW-0547">Nucleotide-binding</keyword>
<keyword id="KW-1185">Reference proteome</keyword>
<reference key="1">
    <citation type="journal article" date="1993" name="EMBO J.">
        <title>One member of a gro-ESL-like chaperonin multigene family in Bradyrhizobium japonicum is co-regulated with symbiotic nitrogen fixation genes.</title>
        <authorList>
            <person name="Fischer H.-M."/>
            <person name="Babst M."/>
            <person name="Kaspar T."/>
            <person name="Acuna G."/>
            <person name="Arigoni F."/>
            <person name="Hennecke H."/>
        </authorList>
    </citation>
    <scope>NUCLEOTIDE SEQUENCE [GENOMIC DNA]</scope>
    <scope>PROTEIN SEQUENCE OF 2-30</scope>
    <source>
        <strain>USDA 110spc4</strain>
    </source>
</reference>
<reference key="2">
    <citation type="journal article" date="2001" name="J. Bacteriol.">
        <title>Potential symbiosis-specific genes uncovered by sequencing a 410-kb DNA region of the Bradyrhizobium japonicum chromosome.</title>
        <authorList>
            <person name="Goettfert M."/>
            <person name="Roethlisberger S."/>
            <person name="Kuendig C."/>
            <person name="Beck C."/>
            <person name="Marty R."/>
            <person name="Hennecke H."/>
        </authorList>
    </citation>
    <scope>NUCLEOTIDE SEQUENCE [GENOMIC DNA]</scope>
    <source>
        <strain>USDA 110spc4</strain>
    </source>
</reference>
<reference key="3">
    <citation type="journal article" date="2002" name="DNA Res.">
        <title>Complete genomic sequence of nitrogen-fixing symbiotic bacterium Bradyrhizobium japonicum USDA110.</title>
        <authorList>
            <person name="Kaneko T."/>
            <person name="Nakamura Y."/>
            <person name="Sato S."/>
            <person name="Minamisawa K."/>
            <person name="Uchiumi T."/>
            <person name="Sasamoto S."/>
            <person name="Watanabe A."/>
            <person name="Idesawa K."/>
            <person name="Iriguchi M."/>
            <person name="Kawashima K."/>
            <person name="Kohara M."/>
            <person name="Matsumoto M."/>
            <person name="Shimpo S."/>
            <person name="Tsuruoka H."/>
            <person name="Wada T."/>
            <person name="Yamada M."/>
            <person name="Tabata S."/>
        </authorList>
    </citation>
    <scope>NUCLEOTIDE SEQUENCE [LARGE SCALE GENOMIC DNA]</scope>
    <source>
        <strain>JCM 10833 / BCRC 13528 / IAM 13628 / NBRC 14792 / USDA 110</strain>
    </source>
</reference>
<feature type="initiator methionine" description="Removed" evidence="2">
    <location>
        <position position="1"/>
    </location>
</feature>
<feature type="chain" id="PRO_0000063296" description="Chaperonin GroEL 3">
    <location>
        <begin position="2"/>
        <end position="546"/>
    </location>
</feature>
<feature type="binding site" evidence="1">
    <location>
        <begin position="30"/>
        <end position="33"/>
    </location>
    <ligand>
        <name>ATP</name>
        <dbReference type="ChEBI" id="CHEBI:30616"/>
    </ligand>
</feature>
<feature type="binding site" evidence="1">
    <location>
        <position position="51"/>
    </location>
    <ligand>
        <name>ATP</name>
        <dbReference type="ChEBI" id="CHEBI:30616"/>
    </ligand>
</feature>
<feature type="binding site" evidence="1">
    <location>
        <begin position="87"/>
        <end position="91"/>
    </location>
    <ligand>
        <name>ATP</name>
        <dbReference type="ChEBI" id="CHEBI:30616"/>
    </ligand>
</feature>
<feature type="binding site" evidence="1">
    <location>
        <position position="415"/>
    </location>
    <ligand>
        <name>ATP</name>
        <dbReference type="ChEBI" id="CHEBI:30616"/>
    </ligand>
</feature>
<feature type="binding site" evidence="1">
    <location>
        <position position="496"/>
    </location>
    <ligand>
        <name>ATP</name>
        <dbReference type="ChEBI" id="CHEBI:30616"/>
    </ligand>
</feature>
<dbReference type="EC" id="5.6.1.7" evidence="1"/>
<dbReference type="EMBL" id="Z22603">
    <property type="protein sequence ID" value="CAA80316.1"/>
    <property type="molecule type" value="Genomic_DNA"/>
</dbReference>
<dbReference type="EMBL" id="AH010242">
    <property type="protein sequence ID" value="AAG61029.1"/>
    <property type="molecule type" value="Genomic_DNA"/>
</dbReference>
<dbReference type="EMBL" id="BA000040">
    <property type="protein sequence ID" value="BAC47324.1"/>
    <property type="molecule type" value="Genomic_DNA"/>
</dbReference>
<dbReference type="PIR" id="S35311">
    <property type="entry name" value="S35311"/>
</dbReference>
<dbReference type="RefSeq" id="NP_768699.1">
    <property type="nucleotide sequence ID" value="NC_004463.1"/>
</dbReference>
<dbReference type="RefSeq" id="WP_011084855.1">
    <property type="nucleotide sequence ID" value="NC_004463.1"/>
</dbReference>
<dbReference type="SMR" id="P35862"/>
<dbReference type="FunCoup" id="P35862">
    <property type="interactions" value="1055"/>
</dbReference>
<dbReference type="STRING" id="224911.AAV28_07125"/>
<dbReference type="EnsemblBacteria" id="BAC47324">
    <property type="protein sequence ID" value="BAC47324"/>
    <property type="gene ID" value="BAC47324"/>
</dbReference>
<dbReference type="GeneID" id="92969592"/>
<dbReference type="KEGG" id="bja:bll2059"/>
<dbReference type="PATRIC" id="fig|224911.44.peg.1564"/>
<dbReference type="eggNOG" id="COG0459">
    <property type="taxonomic scope" value="Bacteria"/>
</dbReference>
<dbReference type="HOGENOM" id="CLU_016503_3_0_5"/>
<dbReference type="InParanoid" id="P35862"/>
<dbReference type="OrthoDB" id="9766614at2"/>
<dbReference type="PhylomeDB" id="P35862"/>
<dbReference type="Proteomes" id="UP000002526">
    <property type="component" value="Chromosome"/>
</dbReference>
<dbReference type="GO" id="GO:1990220">
    <property type="term" value="C:GroEL-GroES complex"/>
    <property type="evidence" value="ECO:0000318"/>
    <property type="project" value="GO_Central"/>
</dbReference>
<dbReference type="GO" id="GO:0005524">
    <property type="term" value="F:ATP binding"/>
    <property type="evidence" value="ECO:0000318"/>
    <property type="project" value="GO_Central"/>
</dbReference>
<dbReference type="GO" id="GO:0140662">
    <property type="term" value="F:ATP-dependent protein folding chaperone"/>
    <property type="evidence" value="ECO:0007669"/>
    <property type="project" value="InterPro"/>
</dbReference>
<dbReference type="GO" id="GO:0016853">
    <property type="term" value="F:isomerase activity"/>
    <property type="evidence" value="ECO:0007669"/>
    <property type="project" value="UniProtKB-KW"/>
</dbReference>
<dbReference type="GO" id="GO:0051082">
    <property type="term" value="F:unfolded protein binding"/>
    <property type="evidence" value="ECO:0000318"/>
    <property type="project" value="GO_Central"/>
</dbReference>
<dbReference type="GO" id="GO:0051085">
    <property type="term" value="P:chaperone cofactor-dependent protein refolding"/>
    <property type="evidence" value="ECO:0000318"/>
    <property type="project" value="GO_Central"/>
</dbReference>
<dbReference type="GO" id="GO:0042026">
    <property type="term" value="P:protein refolding"/>
    <property type="evidence" value="ECO:0007669"/>
    <property type="project" value="UniProtKB-UniRule"/>
</dbReference>
<dbReference type="GO" id="GO:0009408">
    <property type="term" value="P:response to heat"/>
    <property type="evidence" value="ECO:0000318"/>
    <property type="project" value="GO_Central"/>
</dbReference>
<dbReference type="CDD" id="cd03344">
    <property type="entry name" value="GroEL"/>
    <property type="match status" value="1"/>
</dbReference>
<dbReference type="FunFam" id="1.10.560.10:FF:000001">
    <property type="entry name" value="60 kDa chaperonin"/>
    <property type="match status" value="1"/>
</dbReference>
<dbReference type="FunFam" id="3.50.7.10:FF:000001">
    <property type="entry name" value="60 kDa chaperonin"/>
    <property type="match status" value="1"/>
</dbReference>
<dbReference type="Gene3D" id="3.50.7.10">
    <property type="entry name" value="GroEL"/>
    <property type="match status" value="1"/>
</dbReference>
<dbReference type="Gene3D" id="1.10.560.10">
    <property type="entry name" value="GroEL-like equatorial domain"/>
    <property type="match status" value="1"/>
</dbReference>
<dbReference type="Gene3D" id="3.30.260.10">
    <property type="entry name" value="TCP-1-like chaperonin intermediate domain"/>
    <property type="match status" value="1"/>
</dbReference>
<dbReference type="HAMAP" id="MF_00600">
    <property type="entry name" value="CH60"/>
    <property type="match status" value="1"/>
</dbReference>
<dbReference type="InterPro" id="IPR018370">
    <property type="entry name" value="Chaperonin_Cpn60_CS"/>
</dbReference>
<dbReference type="InterPro" id="IPR001844">
    <property type="entry name" value="Cpn60/GroEL"/>
</dbReference>
<dbReference type="InterPro" id="IPR002423">
    <property type="entry name" value="Cpn60/GroEL/TCP-1"/>
</dbReference>
<dbReference type="InterPro" id="IPR027409">
    <property type="entry name" value="GroEL-like_apical_dom_sf"/>
</dbReference>
<dbReference type="InterPro" id="IPR027413">
    <property type="entry name" value="GROEL-like_equatorial_sf"/>
</dbReference>
<dbReference type="InterPro" id="IPR027410">
    <property type="entry name" value="TCP-1-like_intermed_sf"/>
</dbReference>
<dbReference type="NCBIfam" id="TIGR02348">
    <property type="entry name" value="GroEL"/>
    <property type="match status" value="1"/>
</dbReference>
<dbReference type="NCBIfam" id="NF000592">
    <property type="entry name" value="PRK00013.1"/>
    <property type="match status" value="1"/>
</dbReference>
<dbReference type="NCBIfam" id="NF009487">
    <property type="entry name" value="PRK12849.1"/>
    <property type="match status" value="1"/>
</dbReference>
<dbReference type="NCBIfam" id="NF009488">
    <property type="entry name" value="PRK12850.1"/>
    <property type="match status" value="1"/>
</dbReference>
<dbReference type="NCBIfam" id="NF009489">
    <property type="entry name" value="PRK12851.1"/>
    <property type="match status" value="1"/>
</dbReference>
<dbReference type="NCBIfam" id="NF010704">
    <property type="entry name" value="PRK14104.1"/>
    <property type="match status" value="1"/>
</dbReference>
<dbReference type="PANTHER" id="PTHR45633">
    <property type="entry name" value="60 KDA HEAT SHOCK PROTEIN, MITOCHONDRIAL"/>
    <property type="match status" value="1"/>
</dbReference>
<dbReference type="Pfam" id="PF00118">
    <property type="entry name" value="Cpn60_TCP1"/>
    <property type="match status" value="1"/>
</dbReference>
<dbReference type="PRINTS" id="PR00298">
    <property type="entry name" value="CHAPERONIN60"/>
</dbReference>
<dbReference type="SUPFAM" id="SSF52029">
    <property type="entry name" value="GroEL apical domain-like"/>
    <property type="match status" value="1"/>
</dbReference>
<dbReference type="SUPFAM" id="SSF48592">
    <property type="entry name" value="GroEL equatorial domain-like"/>
    <property type="match status" value="1"/>
</dbReference>
<dbReference type="SUPFAM" id="SSF54849">
    <property type="entry name" value="GroEL-intermediate domain like"/>
    <property type="match status" value="1"/>
</dbReference>
<dbReference type="PROSITE" id="PS00296">
    <property type="entry name" value="CHAPERONINS_CPN60"/>
    <property type="match status" value="1"/>
</dbReference>
<sequence length="546" mass="57785">MSAKEVKFGVNARDRMLRGVDILANAVQVTLGPKGRNVVLDKSFGAPRITKDGVAVAKEIELDDKFENMGAQMVREVASKAADAAGDGTTTATVLAAAIVREGAKSVAAGMNPMDLKRGIDLAVEAVVADLQKNSKKVTSNDEIAQVGAISANGDQEIGKFLADAVKKVGNEGVITVEEAKSLETELDVVEGMQFDRGYISPYFVTNADKMRVEMDDAYILINEKKLSSLNELLPLLEAVVQTGKPLVIVAEDVEGEALATLVVNRLRGGLKVAAVKAPGFGDRRKAMLQDIAILTGGQAISEDLGIKLENVTLNMLGRAKKVMIDKENTTIVNGAGKKADIEARVAQIKAQIEETTSDYDREKLQERLAKLAGGVAVIRVGGATEVEVKERKDRVDDAMHATRAAVEEGIVPGGGVALLRASEQLKGLRTENDDQKTGVEIVRKALSWPARQIAINAGEDGSIVVGKVLDNEQYSFGFDAQTGEYSNLVSKGIIDPAKVVRIAVQNASSVAGLLITTEAMVAELPKKATAGPAMPAAPGMGGMDF</sequence>
<accession>P35862</accession>
<evidence type="ECO:0000255" key="1">
    <source>
        <dbReference type="HAMAP-Rule" id="MF_00600"/>
    </source>
</evidence>
<evidence type="ECO:0000269" key="2">
    <source>
    </source>
</evidence>
<protein>
    <recommendedName>
        <fullName evidence="1">Chaperonin GroEL 3</fullName>
        <ecNumber evidence="1">5.6.1.7</ecNumber>
    </recommendedName>
    <alternativeName>
        <fullName evidence="1">60 kDa chaperonin 3</fullName>
    </alternativeName>
    <alternativeName>
        <fullName evidence="1">Chaperonin-60 3</fullName>
        <shortName evidence="1">Cpn60 3</shortName>
    </alternativeName>
</protein>
<proteinExistence type="evidence at protein level"/>